<comment type="function">
    <text evidence="3 4">Part of the multicomponent carbazole 1,9a-dioxygenase (CARDO), that converts carbazole (CAR) into 2-aminobiphenyl-2,3-diol. It can use both NAD and NADP as electron donors, but NAD is supposed to be the physiological electron donor.</text>
</comment>
<comment type="catalytic activity">
    <reaction evidence="3">
        <text>2 reduced [2Fe-2S]-[ferredoxin] + NAD(+) + H(+) = 2 oxidized [2Fe-2S]-[ferredoxin] + NADH</text>
        <dbReference type="Rhea" id="RHEA:16521"/>
        <dbReference type="Rhea" id="RHEA-COMP:10000"/>
        <dbReference type="Rhea" id="RHEA-COMP:10001"/>
        <dbReference type="ChEBI" id="CHEBI:15378"/>
        <dbReference type="ChEBI" id="CHEBI:33737"/>
        <dbReference type="ChEBI" id="CHEBI:33738"/>
        <dbReference type="ChEBI" id="CHEBI:57540"/>
        <dbReference type="ChEBI" id="CHEBI:57945"/>
        <dbReference type="EC" id="1.18.1.3"/>
    </reaction>
</comment>
<comment type="catalytic activity">
    <reaction evidence="3">
        <text>2 reduced [2Fe-2S]-[ferredoxin] + NADP(+) + H(+) = 2 oxidized [2Fe-2S]-[ferredoxin] + NADPH</text>
        <dbReference type="Rhea" id="RHEA:20125"/>
        <dbReference type="Rhea" id="RHEA-COMP:10000"/>
        <dbReference type="Rhea" id="RHEA-COMP:10001"/>
        <dbReference type="ChEBI" id="CHEBI:15378"/>
        <dbReference type="ChEBI" id="CHEBI:33737"/>
        <dbReference type="ChEBI" id="CHEBI:33738"/>
        <dbReference type="ChEBI" id="CHEBI:57783"/>
        <dbReference type="ChEBI" id="CHEBI:58349"/>
        <dbReference type="EC" id="1.18.1.2"/>
    </reaction>
</comment>
<comment type="cofactor">
    <cofactor evidence="5">
        <name>[2Fe-2S] cluster</name>
        <dbReference type="ChEBI" id="CHEBI:190135"/>
    </cofactor>
    <text evidence="5">Binds 1 [2Fe-2S] cluster per subunit.</text>
</comment>
<comment type="cofactor">
    <cofactor evidence="5">
        <name>FAD</name>
        <dbReference type="ChEBI" id="CHEBI:57692"/>
    </cofactor>
    <text evidence="5">Binds 1 FAD per subunit.</text>
</comment>
<comment type="biophysicochemical properties">
    <phDependence>
        <text evidence="3">Optimum pH is between 7 and 7.5.</text>
    </phDependence>
    <temperatureDependence>
        <text evidence="3">Optimum temperature is 30 degrees Celsius.</text>
    </temperatureDependence>
</comment>
<comment type="subunit">
    <text evidence="3">Monomer. Carbazole 1,9a-dioxygenase complex consists of a terminal oxygenase component CarAa, a ferredoxin reductase component CarAd and a ferredoxin component CarAc.</text>
</comment>
<protein>
    <recommendedName>
        <fullName>Ferredoxin--NAD(P)(+) reductase CarAd</fullName>
        <ecNumber>1.18.1.2</ecNumber>
        <ecNumber>1.18.1.3</ecNumber>
    </recommendedName>
    <alternativeName>
        <fullName>Carbazole 1,9a-dioxygenase, ferredoxin reductase component</fullName>
        <shortName>CARDO</shortName>
    </alternativeName>
</protein>
<sequence length="329" mass="36104">MYQLKIEGQAPGTCGSGKSLLVSALANGIGFPYECASGGCGVCKFELLEGNVQSMWPDAPGLSSRDREKGNRHLACQCVALSDLRIKVAVQDKYVPTIPISRMEAEVVEVRALTHDLLSVRLRTDGPANFLPGQFCLVEAEQLPGVVRAYSMANLKNPEGIWEFYIKRVPTGRFSPWLFENRKEGARLFLTGPMGTSFFRPGTGRKSLCIGGGAGLSYAAAIARASMRETDKPVKLFYGSRTPRDAVRWIDIDIDEDKLEVVQAVTEDTDSLWQGPTGFIHQVVDAALLETLPEYEIYLAGPPPMVDATVRMLLGKGVPRDQIHFDAFF</sequence>
<reference key="1">
    <citation type="journal article" date="1997" name="J. Bacteriol.">
        <title>Cloning of genes involved in carbazole degradation of Pseudomonas sp. strain CA10: nucleotide sequences of genes and characterization of meta-cleavage enzymes and hydrolase.</title>
        <authorList>
            <person name="Sato S.I."/>
            <person name="Ouchiyama N."/>
            <person name="Kimura T."/>
            <person name="Nojiri H."/>
            <person name="Yamane H."/>
            <person name="Omori T."/>
        </authorList>
    </citation>
    <scope>NUCLEOTIDE SEQUENCE [GENOMIC DNA]</scope>
    <scope>NOMENCLATURE</scope>
    <source>
        <strain>CA10</strain>
    </source>
</reference>
<reference key="2">
    <citation type="journal article" date="1997" name="J. Bacteriol.">
        <title>Identification and characterization of genes encoding carbazole 1,9a-dioxygenase in Pseudomonas sp. strain CA10.</title>
        <authorList>
            <person name="Sato S.I."/>
            <person name="Nam J.W."/>
            <person name="Kasuga K."/>
            <person name="Nojiri H."/>
            <person name="Yamane H."/>
            <person name="Omori T."/>
        </authorList>
    </citation>
    <scope>NUCLEOTIDE SEQUENCE [GENOMIC DNA]</scope>
    <scope>FUNCTION IN THE CARBAZOLE DEGRADATION</scope>
    <source>
        <strain>CA10</strain>
    </source>
</reference>
<reference key="3">
    <citation type="journal article" date="2001" name="J. Bacteriol.">
        <title>Genetic characterization and evolutionary implications of a car gene cluster in the carbazole degrader Pseudomonas sp. strain CA10.</title>
        <authorList>
            <person name="Nojiri H."/>
            <person name="Sekiguchi H."/>
            <person name="Maeda K."/>
            <person name="Urata M."/>
            <person name="Nakai S."/>
            <person name="Yoshida T."/>
            <person name="Habe H."/>
            <person name="Omori T."/>
        </authorList>
    </citation>
    <scope>NUCLEOTIDE SEQUENCE [GENOMIC DNA]</scope>
    <source>
        <strain>CA10</strain>
    </source>
</reference>
<reference key="4">
    <citation type="journal article" date="2003" name="J. Mol. Biol.">
        <title>Complete nucleotide sequence of carbazole/dioxin-degrading plasmid pCAR1 in Pseudomonas resinovorans strain CA10 indicates its mosaicity and the presence of large catabolic transposon Tn4676.</title>
        <authorList>
            <person name="Maeda K."/>
            <person name="Nojiri H."/>
            <person name="Shintani M."/>
            <person name="Yoshida T."/>
            <person name="Habe H."/>
            <person name="Omori T."/>
        </authorList>
    </citation>
    <scope>NUCLEOTIDE SEQUENCE [GENOMIC DNA]</scope>
    <source>
        <plasmid>pCAR1</plasmid>
    </source>
</reference>
<reference key="5">
    <citation type="journal article" date="2004" name="J. Bacteriol.">
        <title>Transcriptional regulation of the ant operon, encoding two-component anthranilate 1,2-dioxygenase, on the carbazole-degradative plasmid pCAR1 of Pseudomonas resinovorans strain CA10.</title>
        <authorList>
            <person name="Urata M."/>
            <person name="Miyakoshi M."/>
            <person name="Kai S."/>
            <person name="Maeda K."/>
            <person name="Habe H."/>
            <person name="Omori T."/>
            <person name="Yamane H."/>
            <person name="Nojiri H."/>
        </authorList>
    </citation>
    <scope>NUCLEOTIDE SEQUENCE [GENOMIC DNA]</scope>
    <source>
        <strain>CA10</strain>
        <plasmid>pCAR1</plasmid>
    </source>
</reference>
<reference key="6">
    <citation type="journal article" date="2006" name="Appl. Environ. Microbiol.">
        <title>Characterization of the replication, maintenance, and transfer features of the IncP-7 plasmid pCAR1, which carries genes involved in carbazole and dioxin degradation.</title>
        <authorList>
            <person name="Shintani M."/>
            <person name="Yano H."/>
            <person name="Habe H."/>
            <person name="Omori T."/>
            <person name="Yamane H."/>
            <person name="Tsuda M."/>
            <person name="Nojiri H."/>
        </authorList>
    </citation>
    <scope>NUCLEOTIDE SEQUENCE [GENOMIC DNA]</scope>
    <source>
        <plasmid>pCAR1</plasmid>
    </source>
</reference>
<reference key="7">
    <citation type="journal article" date="2007" name="J. Bacteriol.">
        <title>Transcriptome analysis of Pseudomonas putida KT2440 harboring the completely sequenced IncP-7 plasmid pCAR1.</title>
        <authorList>
            <person name="Miyakoshi M."/>
            <person name="Shintani M."/>
            <person name="Terabayashi T."/>
            <person name="Kai S."/>
            <person name="Yamane H."/>
            <person name="Nojiri H."/>
        </authorList>
    </citation>
    <scope>NUCLEOTIDE SEQUENCE [GENOMIC DNA]</scope>
    <source>
        <plasmid>pCAR1</plasmid>
    </source>
</reference>
<reference key="8">
    <citation type="journal article" date="2009" name="Appl. Environ. Microbiol.">
        <title>Carbazole-degradative IncP-7 plasmid pCAR1.2 is structurally unstable in Pseudomonas fluorescens Pf0-1, which accumulates catechol, the intermediate of the carbazole degradation pathway.</title>
        <authorList>
            <person name="Takahashi Y."/>
            <person name="Shintani M."/>
            <person name="Li L."/>
            <person name="Yamane H."/>
            <person name="Nojiri H."/>
        </authorList>
    </citation>
    <scope>NUCLEOTIDE SEQUENCE [GENOMIC DNA]</scope>
    <source>
        <plasmid>pCAR1</plasmid>
    </source>
</reference>
<reference key="9">
    <citation type="journal article" date="2009" name="Biosci. Biotechnol. Biochem.">
        <title>The complete nucleotide sequence of pCAR2: pCAR2 and pCAR1 were structurally identical IncP-7 carbazole degradative plasmids.</title>
        <authorList>
            <person name="Takahashi Y."/>
            <person name="Shintani M."/>
            <person name="Yamane H."/>
            <person name="Nojiri H."/>
        </authorList>
    </citation>
    <scope>NUCLEOTIDE SEQUENCE [GENOMIC DNA]</scope>
    <source>
        <plasmid>pCAR1</plasmid>
    </source>
</reference>
<reference key="10">
    <citation type="journal article" date="2009" name="BMC Genomics">
        <title>High-resolution mapping of plasmid transcriptomes in different host bacteria.</title>
        <authorList>
            <person name="Miyakoshi M."/>
            <person name="Nishida H."/>
            <person name="Shintani M."/>
            <person name="Yamane H."/>
            <person name="Nojiri H."/>
        </authorList>
    </citation>
    <scope>NUCLEOTIDE SEQUENCE [GENOMIC DNA]</scope>
    <source>
        <plasmid>pCAR1</plasmid>
    </source>
</reference>
<reference key="11">
    <citation type="journal article" date="2010" name="Environ. Microbiol.">
        <title>Response of the Pseudomonas host chromosomal transcriptome to carriage of the IncP-7 plasmid pCAR1.</title>
        <authorList>
            <person name="Shintani M."/>
            <person name="Takahashi Y."/>
            <person name="Tokumaru H."/>
            <person name="Kadota K."/>
            <person name="Hara H."/>
            <person name="Miyakoshi M."/>
            <person name="Naito K."/>
            <person name="Yamane H."/>
            <person name="Nishida H."/>
            <person name="Nojiri H."/>
        </authorList>
    </citation>
    <scope>NUCLEOTIDE SEQUENCE [GENOMIC DNA]</scope>
    <source>
        <plasmid>pCAR1</plasmid>
    </source>
</reference>
<reference key="12">
    <citation type="journal article" date="2010" name="J. Bacteriol.">
        <title>Pmr, a histone-like protein H1 (H-NS) family protein encoded by the IncP-7 plasmid pCAR1, is a key global regulator that alters host function.</title>
        <authorList>
            <person name="Yun C.S."/>
            <person name="Suzuki C."/>
            <person name="Naito K."/>
            <person name="Takeda T."/>
            <person name="Takahashi Y."/>
            <person name="Sai F."/>
            <person name="Terabayashi T."/>
            <person name="Miyakoshi M."/>
            <person name="Shintani M."/>
            <person name="Nishida H."/>
            <person name="Yamane H."/>
            <person name="Nojiri H."/>
        </authorList>
    </citation>
    <scope>NUCLEOTIDE SEQUENCE [GENOMIC DNA]</scope>
    <source>
        <plasmid>pCAR1</plasmid>
    </source>
</reference>
<reference key="13">
    <citation type="journal article" date="2002" name="Appl. Environ. Microbiol.">
        <title>Purification and characterization of carbazole 1,9a-dioxygenase, a three-component dioxygenase system of Pseudomonas resinovorans strain CA10.</title>
        <authorList>
            <person name="Nam J.W."/>
            <person name="Nojiri H."/>
            <person name="Noguchi H."/>
            <person name="Uchimura H."/>
            <person name="Yoshida T."/>
            <person name="Habe H."/>
            <person name="Yamane H."/>
            <person name="Omori T."/>
        </authorList>
    </citation>
    <scope>PROTEIN SEQUENCE OF 1-15</scope>
    <scope>FUNCTION AS A FERREDOXIN REDUCTASE</scope>
    <scope>CATALYTIC ACTIVITY</scope>
    <scope>BIOPHYSICOCHEMICAL PROPERTIES</scope>
    <scope>COFACTOR</scope>
    <scope>SUBUNIT</scope>
</reference>
<geneLocation type="plasmid">
    <name>pCAR1</name>
</geneLocation>
<keyword id="KW-0001">2Fe-2S</keyword>
<keyword id="KW-0223">Dioxygenase</keyword>
<keyword id="KW-0903">Direct protein sequencing</keyword>
<keyword id="KW-0408">Iron</keyword>
<keyword id="KW-0411">Iron-sulfur</keyword>
<keyword id="KW-0479">Metal-binding</keyword>
<keyword id="KW-0520">NAD</keyword>
<keyword id="KW-0521">NADP</keyword>
<keyword id="KW-0560">Oxidoreductase</keyword>
<keyword id="KW-0614">Plasmid</keyword>
<accession>Q8GI14</accession>
<feature type="chain" id="PRO_0000419026" description="Ferredoxin--NAD(P)(+) reductase CarAd">
    <location>
        <begin position="1"/>
        <end position="329"/>
    </location>
</feature>
<feature type="domain" description="2Fe-2S ferredoxin-type" evidence="1">
    <location>
        <begin position="2"/>
        <end position="92"/>
    </location>
</feature>
<feature type="domain" description="FAD-binding FR-type" evidence="2">
    <location>
        <begin position="100"/>
        <end position="200"/>
    </location>
</feature>
<feature type="binding site" evidence="1">
    <location>
        <position position="35"/>
    </location>
    <ligand>
        <name>[2Fe-2S] cluster</name>
        <dbReference type="ChEBI" id="CHEBI:190135"/>
    </ligand>
</feature>
<feature type="binding site" evidence="1">
    <location>
        <position position="40"/>
    </location>
    <ligand>
        <name>[2Fe-2S] cluster</name>
        <dbReference type="ChEBI" id="CHEBI:190135"/>
    </ligand>
</feature>
<feature type="binding site" evidence="1">
    <location>
        <position position="43"/>
    </location>
    <ligand>
        <name>[2Fe-2S] cluster</name>
        <dbReference type="ChEBI" id="CHEBI:190135"/>
    </ligand>
</feature>
<feature type="binding site" evidence="1">
    <location>
        <position position="76"/>
    </location>
    <ligand>
        <name>[2Fe-2S] cluster</name>
        <dbReference type="ChEBI" id="CHEBI:190135"/>
    </ligand>
</feature>
<dbReference type="EC" id="1.18.1.2"/>
<dbReference type="EC" id="1.18.1.3"/>
<dbReference type="EMBL" id="AB047548">
    <property type="protein sequence ID" value="BAB32772.1"/>
    <property type="molecule type" value="Genomic_DNA"/>
</dbReference>
<dbReference type="EMBL" id="AB088420">
    <property type="protein sequence ID" value="BAC41551.1"/>
    <property type="molecule type" value="Genomic_DNA"/>
</dbReference>
<dbReference type="RefSeq" id="NP_758573.1">
    <property type="nucleotide sequence ID" value="NC_004444.1"/>
</dbReference>
<dbReference type="RefSeq" id="WP_011077884.1">
    <property type="nucleotide sequence ID" value="NC_004444.1"/>
</dbReference>
<dbReference type="SMR" id="Q8GI14"/>
<dbReference type="BRENDA" id="1.14.12.22">
    <property type="organism ID" value="7692"/>
</dbReference>
<dbReference type="GO" id="GO:0051537">
    <property type="term" value="F:2 iron, 2 sulfur cluster binding"/>
    <property type="evidence" value="ECO:0000314"/>
    <property type="project" value="UniProtKB"/>
</dbReference>
<dbReference type="GO" id="GO:0051213">
    <property type="term" value="F:dioxygenase activity"/>
    <property type="evidence" value="ECO:0007669"/>
    <property type="project" value="UniProtKB-KW"/>
</dbReference>
<dbReference type="GO" id="GO:0071949">
    <property type="term" value="F:FAD binding"/>
    <property type="evidence" value="ECO:0000314"/>
    <property type="project" value="UniProtKB"/>
</dbReference>
<dbReference type="GO" id="GO:0008860">
    <property type="term" value="F:ferredoxin-NAD+ reductase activity"/>
    <property type="evidence" value="ECO:0000314"/>
    <property type="project" value="UniProtKB"/>
</dbReference>
<dbReference type="GO" id="GO:0004324">
    <property type="term" value="F:ferredoxin-NADP+ reductase activity"/>
    <property type="evidence" value="ECO:0000314"/>
    <property type="project" value="UniProtKB"/>
</dbReference>
<dbReference type="GO" id="GO:0046872">
    <property type="term" value="F:metal ion binding"/>
    <property type="evidence" value="ECO:0007669"/>
    <property type="project" value="UniProtKB-KW"/>
</dbReference>
<dbReference type="GO" id="GO:0051287">
    <property type="term" value="F:NAD binding"/>
    <property type="evidence" value="ECO:0000314"/>
    <property type="project" value="UniProtKB"/>
</dbReference>
<dbReference type="GO" id="GO:0050661">
    <property type="term" value="F:NADP binding"/>
    <property type="evidence" value="ECO:0000314"/>
    <property type="project" value="UniProtKB"/>
</dbReference>
<dbReference type="GO" id="GO:0046232">
    <property type="term" value="P:carbazole catabolic process"/>
    <property type="evidence" value="ECO:0000314"/>
    <property type="project" value="UniProtKB"/>
</dbReference>
<dbReference type="CDD" id="cd00207">
    <property type="entry name" value="fer2"/>
    <property type="match status" value="1"/>
</dbReference>
<dbReference type="CDD" id="cd06190">
    <property type="entry name" value="T4MO_e_transfer_like"/>
    <property type="match status" value="1"/>
</dbReference>
<dbReference type="Gene3D" id="3.10.20.30">
    <property type="match status" value="1"/>
</dbReference>
<dbReference type="Gene3D" id="3.40.50.80">
    <property type="entry name" value="Nucleotide-binding domain of ferredoxin-NADP reductase (FNR) module"/>
    <property type="match status" value="1"/>
</dbReference>
<dbReference type="Gene3D" id="2.40.30.10">
    <property type="entry name" value="Translation factors"/>
    <property type="match status" value="1"/>
</dbReference>
<dbReference type="InterPro" id="IPR036010">
    <property type="entry name" value="2Fe-2S_ferredoxin-like_sf"/>
</dbReference>
<dbReference type="InterPro" id="IPR001041">
    <property type="entry name" value="2Fe-2S_ferredoxin-type"/>
</dbReference>
<dbReference type="InterPro" id="IPR006058">
    <property type="entry name" value="2Fe2S_fd_BS"/>
</dbReference>
<dbReference type="InterPro" id="IPR012675">
    <property type="entry name" value="Beta-grasp_dom_sf"/>
</dbReference>
<dbReference type="InterPro" id="IPR008333">
    <property type="entry name" value="Cbr1-like_FAD-bd_dom"/>
</dbReference>
<dbReference type="InterPro" id="IPR017927">
    <property type="entry name" value="FAD-bd_FR_type"/>
</dbReference>
<dbReference type="InterPro" id="IPR039261">
    <property type="entry name" value="FNR_nucleotide-bd"/>
</dbReference>
<dbReference type="InterPro" id="IPR050415">
    <property type="entry name" value="MRET"/>
</dbReference>
<dbReference type="InterPro" id="IPR001433">
    <property type="entry name" value="OxRdtase_FAD/NAD-bd"/>
</dbReference>
<dbReference type="InterPro" id="IPR017938">
    <property type="entry name" value="Riboflavin_synthase-like_b-brl"/>
</dbReference>
<dbReference type="PANTHER" id="PTHR47354">
    <property type="entry name" value="NADH OXIDOREDUCTASE HCR"/>
    <property type="match status" value="1"/>
</dbReference>
<dbReference type="PANTHER" id="PTHR47354:SF5">
    <property type="entry name" value="PROTEIN RFBI"/>
    <property type="match status" value="1"/>
</dbReference>
<dbReference type="Pfam" id="PF00970">
    <property type="entry name" value="FAD_binding_6"/>
    <property type="match status" value="1"/>
</dbReference>
<dbReference type="Pfam" id="PF00111">
    <property type="entry name" value="Fer2"/>
    <property type="match status" value="1"/>
</dbReference>
<dbReference type="Pfam" id="PF00175">
    <property type="entry name" value="NAD_binding_1"/>
    <property type="match status" value="1"/>
</dbReference>
<dbReference type="PRINTS" id="PR00410">
    <property type="entry name" value="PHEHYDRXLASE"/>
</dbReference>
<dbReference type="SUPFAM" id="SSF54292">
    <property type="entry name" value="2Fe-2S ferredoxin-like"/>
    <property type="match status" value="1"/>
</dbReference>
<dbReference type="SUPFAM" id="SSF52343">
    <property type="entry name" value="Ferredoxin reductase-like, C-terminal NADP-linked domain"/>
    <property type="match status" value="1"/>
</dbReference>
<dbReference type="SUPFAM" id="SSF63380">
    <property type="entry name" value="Riboflavin synthase domain-like"/>
    <property type="match status" value="1"/>
</dbReference>
<dbReference type="PROSITE" id="PS00197">
    <property type="entry name" value="2FE2S_FER_1"/>
    <property type="match status" value="1"/>
</dbReference>
<dbReference type="PROSITE" id="PS51085">
    <property type="entry name" value="2FE2S_FER_2"/>
    <property type="match status" value="1"/>
</dbReference>
<dbReference type="PROSITE" id="PS51384">
    <property type="entry name" value="FAD_FR"/>
    <property type="match status" value="1"/>
</dbReference>
<organism>
    <name type="scientific">Metapseudomonas resinovorans</name>
    <name type="common">Pseudomonas resinovorans</name>
    <dbReference type="NCBI Taxonomy" id="53412"/>
    <lineage>
        <taxon>Bacteria</taxon>
        <taxon>Pseudomonadati</taxon>
        <taxon>Pseudomonadota</taxon>
        <taxon>Gammaproteobacteria</taxon>
        <taxon>Pseudomonadales</taxon>
        <taxon>Pseudomonadaceae</taxon>
        <taxon>Metapseudomonas</taxon>
    </lineage>
</organism>
<evidence type="ECO:0000255" key="1">
    <source>
        <dbReference type="PROSITE-ProRule" id="PRU00465"/>
    </source>
</evidence>
<evidence type="ECO:0000255" key="2">
    <source>
        <dbReference type="PROSITE-ProRule" id="PRU00716"/>
    </source>
</evidence>
<evidence type="ECO:0000269" key="3">
    <source>
    </source>
</evidence>
<evidence type="ECO:0000269" key="4">
    <source>
    </source>
</evidence>
<evidence type="ECO:0000305" key="5">
    <source>
    </source>
</evidence>
<name>CARAD_METRE</name>
<gene>
    <name type="primary">carAd</name>
</gene>
<proteinExistence type="evidence at protein level"/>